<sequence>MMAYMNPGPHYSVNALALSGPSVDLMHPAVSYPSAPRKQRRERTTFTRSQLEELEALFAKTQYPDVYAREEVALKINLPESRVQVWFKNRRAKCRQQRQQQKQQQQPPGAQAKARPAKRKAGTSPRSSTDVCPDPLGISDSYSPPLPGPSGSPTTAVATVSIWSPASESPLPEAQRAGLVASGPSLTSAPYAMTYAPASAFCSSPSAYGSPSSYFSGLDPYLSPMVPPLGGPALSPLSGPSVGPSLTQSPTSLSGQSYGTYSPVDSLEFKDPTGTWKFTYNPMDPLDYKDQSAWKFQIL</sequence>
<feature type="chain" id="PRO_0000048860" description="Cone-rod homeobox protein">
    <location>
        <begin position="1"/>
        <end position="299"/>
    </location>
</feature>
<feature type="DNA-binding region" description="Homeobox" evidence="2">
    <location>
        <begin position="39"/>
        <end position="98"/>
    </location>
</feature>
<feature type="region of interest" description="Disordered" evidence="3">
    <location>
        <begin position="94"/>
        <end position="155"/>
    </location>
</feature>
<feature type="region of interest" description="Disordered" evidence="3">
    <location>
        <begin position="236"/>
        <end position="258"/>
    </location>
</feature>
<feature type="compositionally biased region" description="Low complexity" evidence="3">
    <location>
        <begin position="97"/>
        <end position="114"/>
    </location>
</feature>
<feature type="compositionally biased region" description="Low complexity" evidence="3">
    <location>
        <begin position="236"/>
        <end position="246"/>
    </location>
</feature>
<feature type="compositionally biased region" description="Polar residues" evidence="3">
    <location>
        <begin position="247"/>
        <end position="258"/>
    </location>
</feature>
<accession>Q9XSK0</accession>
<reference key="1">
    <citation type="submission" date="1999-05" db="EMBL/GenBank/DDBJ databases">
        <title>Interaction of phosducin and PhLOP1 with CRX: potential transcriptional regulation function.</title>
        <authorList>
            <person name="Zhu X."/>
            <person name="Craft C.M."/>
        </authorList>
    </citation>
    <scope>NUCLEOTIDE SEQUENCE [MRNA]</scope>
    <source>
        <tissue>Retina</tissue>
    </source>
</reference>
<organism>
    <name type="scientific">Bos taurus</name>
    <name type="common">Bovine</name>
    <dbReference type="NCBI Taxonomy" id="9913"/>
    <lineage>
        <taxon>Eukaryota</taxon>
        <taxon>Metazoa</taxon>
        <taxon>Chordata</taxon>
        <taxon>Craniata</taxon>
        <taxon>Vertebrata</taxon>
        <taxon>Euteleostomi</taxon>
        <taxon>Mammalia</taxon>
        <taxon>Eutheria</taxon>
        <taxon>Laurasiatheria</taxon>
        <taxon>Artiodactyla</taxon>
        <taxon>Ruminantia</taxon>
        <taxon>Pecora</taxon>
        <taxon>Bovidae</taxon>
        <taxon>Bovinae</taxon>
        <taxon>Bos</taxon>
    </lineage>
</organism>
<protein>
    <recommendedName>
        <fullName>Cone-rod homeobox protein</fullName>
    </recommendedName>
</protein>
<comment type="function">
    <text evidence="1">Transcription factor that binds and transactivates the sequence 5'-TAATC[CA]-3' which is found upstream of several photoreceptor-specific genes, including the opsin genes. Acts synergistically with other transcription factors, such as NRL, RORB and RAX, to regulate photoreceptor cell-specific gene transcription. Essential for the maintenance of mammalian photoreceptors (By similarity).</text>
</comment>
<comment type="subunit">
    <text evidence="1">Interacts (via the homeobox) with NRL (via the leucine-zipper domain). Interacts with PDC, RAX2, RORB and SCA7 (By similarity).</text>
</comment>
<comment type="interaction">
    <interactant intactId="EBI-8843794">
        <id>Q9XSK0</id>
    </interactant>
    <interactant intactId="EBI-8843813">
        <id>P54845</id>
        <label>NRL</label>
    </interactant>
    <organismsDiffer>true</organismsDiffer>
    <experiments>6</experiments>
</comment>
<comment type="subcellular location">
    <subcellularLocation>
        <location evidence="2">Nucleus</location>
    </subcellularLocation>
</comment>
<comment type="tissue specificity">
    <text>Retina.</text>
</comment>
<comment type="similarity">
    <text evidence="4">Belongs to the paired homeobox family.</text>
</comment>
<name>CRX_BOVIN</name>
<keyword id="KW-0010">Activator</keyword>
<keyword id="KW-0217">Developmental protein</keyword>
<keyword id="KW-0221">Differentiation</keyword>
<keyword id="KW-0238">DNA-binding</keyword>
<keyword id="KW-0371">Homeobox</keyword>
<keyword id="KW-0524">Neurogenesis</keyword>
<keyword id="KW-0539">Nucleus</keyword>
<keyword id="KW-1185">Reference proteome</keyword>
<keyword id="KW-0716">Sensory transduction</keyword>
<keyword id="KW-0804">Transcription</keyword>
<keyword id="KW-0805">Transcription regulation</keyword>
<keyword id="KW-0844">Vision</keyword>
<gene>
    <name type="primary">CRX</name>
</gene>
<evidence type="ECO:0000250" key="1"/>
<evidence type="ECO:0000255" key="2">
    <source>
        <dbReference type="PROSITE-ProRule" id="PRU00108"/>
    </source>
</evidence>
<evidence type="ECO:0000256" key="3">
    <source>
        <dbReference type="SAM" id="MobiDB-lite"/>
    </source>
</evidence>
<evidence type="ECO:0000305" key="4"/>
<dbReference type="EMBL" id="AF154123">
    <property type="protein sequence ID" value="AAD34645.1"/>
    <property type="molecule type" value="mRNA"/>
</dbReference>
<dbReference type="RefSeq" id="NP_776329.1">
    <property type="nucleotide sequence ID" value="NM_173904.2"/>
</dbReference>
<dbReference type="SMR" id="Q9XSK0"/>
<dbReference type="BioGRID" id="158156">
    <property type="interactions" value="1"/>
</dbReference>
<dbReference type="CORUM" id="Q9XSK0"/>
<dbReference type="FunCoup" id="Q9XSK0">
    <property type="interactions" value="37"/>
</dbReference>
<dbReference type="IntAct" id="Q9XSK0">
    <property type="interactions" value="2"/>
</dbReference>
<dbReference type="STRING" id="9913.ENSBTAP00000028232"/>
<dbReference type="PaxDb" id="9913-ENSBTAP00000028232"/>
<dbReference type="GeneID" id="280756"/>
<dbReference type="KEGG" id="bta:280756"/>
<dbReference type="CTD" id="1406"/>
<dbReference type="eggNOG" id="KOG2251">
    <property type="taxonomic scope" value="Eukaryota"/>
</dbReference>
<dbReference type="HOGENOM" id="CLU_064370_0_0_1"/>
<dbReference type="InParanoid" id="Q9XSK0"/>
<dbReference type="OrthoDB" id="6159439at2759"/>
<dbReference type="TreeFam" id="TF351179"/>
<dbReference type="Proteomes" id="UP000009136">
    <property type="component" value="Unplaced"/>
</dbReference>
<dbReference type="GO" id="GO:0000785">
    <property type="term" value="C:chromatin"/>
    <property type="evidence" value="ECO:0000314"/>
    <property type="project" value="ARUK-UCL"/>
</dbReference>
<dbReference type="GO" id="GO:0005634">
    <property type="term" value="C:nucleus"/>
    <property type="evidence" value="ECO:0000250"/>
    <property type="project" value="UniProtKB"/>
</dbReference>
<dbReference type="GO" id="GO:0090575">
    <property type="term" value="C:RNA polymerase II transcription regulator complex"/>
    <property type="evidence" value="ECO:0000314"/>
    <property type="project" value="ARUK-UCL"/>
</dbReference>
<dbReference type="GO" id="GO:0001216">
    <property type="term" value="F:DNA-binding transcription activator activity"/>
    <property type="evidence" value="ECO:0000314"/>
    <property type="project" value="ARUK-UCL"/>
</dbReference>
<dbReference type="GO" id="GO:0003700">
    <property type="term" value="F:DNA-binding transcription factor activity"/>
    <property type="evidence" value="ECO:0000250"/>
    <property type="project" value="UniProtKB"/>
</dbReference>
<dbReference type="GO" id="GO:0000981">
    <property type="term" value="F:DNA-binding transcription factor activity, RNA polymerase II-specific"/>
    <property type="evidence" value="ECO:0000318"/>
    <property type="project" value="GO_Central"/>
</dbReference>
<dbReference type="GO" id="GO:0016922">
    <property type="term" value="F:nuclear receptor binding"/>
    <property type="evidence" value="ECO:0000250"/>
    <property type="project" value="UniProtKB"/>
</dbReference>
<dbReference type="GO" id="GO:0000978">
    <property type="term" value="F:RNA polymerase II cis-regulatory region sequence-specific DNA binding"/>
    <property type="evidence" value="ECO:0000318"/>
    <property type="project" value="GO_Central"/>
</dbReference>
<dbReference type="GO" id="GO:0000977">
    <property type="term" value="F:RNA polymerase II transcription regulatory region sequence-specific DNA binding"/>
    <property type="evidence" value="ECO:0000314"/>
    <property type="project" value="ARUK-UCL"/>
</dbReference>
<dbReference type="GO" id="GO:0061629">
    <property type="term" value="F:RNA polymerase II-specific DNA-binding transcription factor binding"/>
    <property type="evidence" value="ECO:0000353"/>
    <property type="project" value="ARUK-UCL"/>
</dbReference>
<dbReference type="GO" id="GO:0030154">
    <property type="term" value="P:cell differentiation"/>
    <property type="evidence" value="ECO:0007669"/>
    <property type="project" value="UniProtKB-KW"/>
</dbReference>
<dbReference type="GO" id="GO:0007399">
    <property type="term" value="P:nervous system development"/>
    <property type="evidence" value="ECO:0007669"/>
    <property type="project" value="UniProtKB-KW"/>
</dbReference>
<dbReference type="GO" id="GO:0045944">
    <property type="term" value="P:positive regulation of transcription by RNA polymerase II"/>
    <property type="evidence" value="ECO:0000314"/>
    <property type="project" value="ARUK-UCL"/>
</dbReference>
<dbReference type="GO" id="GO:0006355">
    <property type="term" value="P:regulation of DNA-templated transcription"/>
    <property type="evidence" value="ECO:0000250"/>
    <property type="project" value="UniProtKB"/>
</dbReference>
<dbReference type="GO" id="GO:0006357">
    <property type="term" value="P:regulation of transcription by RNA polymerase II"/>
    <property type="evidence" value="ECO:0000318"/>
    <property type="project" value="GO_Central"/>
</dbReference>
<dbReference type="GO" id="GO:0007601">
    <property type="term" value="P:visual perception"/>
    <property type="evidence" value="ECO:0007669"/>
    <property type="project" value="UniProtKB-KW"/>
</dbReference>
<dbReference type="CDD" id="cd00086">
    <property type="entry name" value="homeodomain"/>
    <property type="match status" value="1"/>
</dbReference>
<dbReference type="FunFam" id="1.10.10.60:FF:000068">
    <property type="entry name" value="Orthodenticle homeobox 1"/>
    <property type="match status" value="1"/>
</dbReference>
<dbReference type="Gene3D" id="1.10.10.60">
    <property type="entry name" value="Homeodomain-like"/>
    <property type="match status" value="1"/>
</dbReference>
<dbReference type="InterPro" id="IPR001356">
    <property type="entry name" value="HD"/>
</dbReference>
<dbReference type="InterPro" id="IPR017970">
    <property type="entry name" value="Homeobox_CS"/>
</dbReference>
<dbReference type="InterPro" id="IPR009057">
    <property type="entry name" value="Homeodomain-like_sf"/>
</dbReference>
<dbReference type="InterPro" id="IPR013851">
    <property type="entry name" value="Otx_TF_C"/>
</dbReference>
<dbReference type="PANTHER" id="PTHR45793:SF22">
    <property type="entry name" value="CONE-ROD HOMEOBOX PROTEIN"/>
    <property type="match status" value="1"/>
</dbReference>
<dbReference type="PANTHER" id="PTHR45793">
    <property type="entry name" value="HOMEOBOX PROTEIN"/>
    <property type="match status" value="1"/>
</dbReference>
<dbReference type="Pfam" id="PF00046">
    <property type="entry name" value="Homeodomain"/>
    <property type="match status" value="1"/>
</dbReference>
<dbReference type="Pfam" id="PF03529">
    <property type="entry name" value="TF_Otx"/>
    <property type="match status" value="1"/>
</dbReference>
<dbReference type="SMART" id="SM00389">
    <property type="entry name" value="HOX"/>
    <property type="match status" value="1"/>
</dbReference>
<dbReference type="SUPFAM" id="SSF46689">
    <property type="entry name" value="Homeodomain-like"/>
    <property type="match status" value="1"/>
</dbReference>
<dbReference type="PROSITE" id="PS00027">
    <property type="entry name" value="HOMEOBOX_1"/>
    <property type="match status" value="1"/>
</dbReference>
<dbReference type="PROSITE" id="PS50071">
    <property type="entry name" value="HOMEOBOX_2"/>
    <property type="match status" value="1"/>
</dbReference>
<proteinExistence type="evidence at protein level"/>